<comment type="function">
    <text evidence="1">Possesses two activities: a DNA synthesis (polymerase) and an exonucleolytic activity that degrades single-stranded DNA in the 3' to 5' direction. Has a template-primer preference which is characteristic of a replicative DNA polymerase (By similarity).</text>
</comment>
<comment type="catalytic activity">
    <reaction>
        <text>DNA(n) + a 2'-deoxyribonucleoside 5'-triphosphate = DNA(n+1) + diphosphate</text>
        <dbReference type="Rhea" id="RHEA:22508"/>
        <dbReference type="Rhea" id="RHEA-COMP:17339"/>
        <dbReference type="Rhea" id="RHEA-COMP:17340"/>
        <dbReference type="ChEBI" id="CHEBI:33019"/>
        <dbReference type="ChEBI" id="CHEBI:61560"/>
        <dbReference type="ChEBI" id="CHEBI:173112"/>
        <dbReference type="EC" id="2.7.7.7"/>
    </reaction>
</comment>
<comment type="catalytic activity">
    <reaction>
        <text>Exonucleolytic cleavage in the 3'- to 5'-direction to yield nucleoside 5'-phosphates.</text>
        <dbReference type="EC" id="3.1.11.1"/>
    </reaction>
</comment>
<comment type="subunit">
    <text evidence="1">Heterodimer of a large subunit and a small subunit.</text>
</comment>
<comment type="similarity">
    <text evidence="3">Belongs to the DNA polymerase delta/II small subunit family.</text>
</comment>
<comment type="sequence caution" evidence="3">
    <conflict type="erroneous initiation">
        <sequence resource="EMBL-CDS" id="AAG20504"/>
    </conflict>
</comment>
<proteinExistence type="inferred from homology"/>
<organism>
    <name type="scientific">Halobacterium salinarum (strain ATCC 700922 / JCM 11081 / NRC-1)</name>
    <name type="common">Halobacterium halobium</name>
    <dbReference type="NCBI Taxonomy" id="64091"/>
    <lineage>
        <taxon>Archaea</taxon>
        <taxon>Methanobacteriati</taxon>
        <taxon>Methanobacteriota</taxon>
        <taxon>Stenosarchaea group</taxon>
        <taxon>Halobacteria</taxon>
        <taxon>Halobacteriales</taxon>
        <taxon>Halobacteriaceae</taxon>
        <taxon>Halobacterium</taxon>
        <taxon>Halobacterium salinarum NRC-34001</taxon>
    </lineage>
</organism>
<protein>
    <recommendedName>
        <fullName>DNA polymerase II small subunit</fullName>
        <shortName>Pol II</shortName>
        <ecNumber>2.7.7.7</ecNumber>
    </recommendedName>
    <alternativeName>
        <fullName>Exodeoxyribonuclease small subunit</fullName>
        <ecNumber>3.1.11.1</ecNumber>
    </alternativeName>
</protein>
<sequence length="508" mass="54539">MPLEPSVRVVRELTSRGYNADREAVTLLAGADDPGAAVERAVAAAAADAATLTVSDVRAVLDAHTASSAAQTSAPASTPPDEATTHTDPSATDTPPNHDGGRAATADARSVEIDGDMTGASTGTGEYQDFVSVFRDRYDRLAAQLRGRVNHRPTSALASMPGGSDAAIVGMVNDIRSTTSGHWRVELEDTNGVFPVLVLKDRDVSDLVDDLLLDEVIAVSGTLADDGTILFADDIYFPEVPRTYSPSTADRSVQAALISDVHVGSQEFAADAWRSFADWLHTPAAESVEYLLIAGDMVEGVGVYPGQDEELDIVDIYDQYETFAEHLKDVPGDMEIVMIPGNHDAVRLAEPQPAFDEELRSIMRAHDARITSNPSTVTIDGVSVLLYHGVSLDEVIAEHPSDDVTYDDPQNAMELLLKKRHVAPPFGGRTRLAPEAEDHLAIDTVPDVFHTGHVHKLGVGIHHNVRLVNSGCWQHQTAFQESVNISPDVATAPILDLDTLDITVHKFS</sequence>
<keyword id="KW-0235">DNA replication</keyword>
<keyword id="KW-0238">DNA-binding</keyword>
<keyword id="KW-0239">DNA-directed DNA polymerase</keyword>
<keyword id="KW-0269">Exonuclease</keyword>
<keyword id="KW-0378">Hydrolase</keyword>
<keyword id="KW-0511">Multifunctional enzyme</keyword>
<keyword id="KW-0540">Nuclease</keyword>
<keyword id="KW-0548">Nucleotidyltransferase</keyword>
<keyword id="KW-1185">Reference proteome</keyword>
<keyword id="KW-0808">Transferase</keyword>
<name>DP2S_HALSA</name>
<feature type="chain" id="PRO_0000096176" description="DNA polymerase II small subunit">
    <location>
        <begin position="1"/>
        <end position="508"/>
    </location>
</feature>
<feature type="region of interest" description="Disordered" evidence="2">
    <location>
        <begin position="66"/>
        <end position="122"/>
    </location>
</feature>
<feature type="compositionally biased region" description="Low complexity" evidence="2">
    <location>
        <begin position="66"/>
        <end position="80"/>
    </location>
</feature>
<feature type="compositionally biased region" description="Polar residues" evidence="2">
    <location>
        <begin position="86"/>
        <end position="95"/>
    </location>
</feature>
<accession>Q9HMR7</accession>
<reference key="1">
    <citation type="journal article" date="2000" name="Proc. Natl. Acad. Sci. U.S.A.">
        <title>Genome sequence of Halobacterium species NRC-1.</title>
        <authorList>
            <person name="Ng W.V."/>
            <person name="Kennedy S.P."/>
            <person name="Mahairas G.G."/>
            <person name="Berquist B."/>
            <person name="Pan M."/>
            <person name="Shukla H.D."/>
            <person name="Lasky S.R."/>
            <person name="Baliga N.S."/>
            <person name="Thorsson V."/>
            <person name="Sbrogna J."/>
            <person name="Swartzell S."/>
            <person name="Weir D."/>
            <person name="Hall J."/>
            <person name="Dahl T.A."/>
            <person name="Welti R."/>
            <person name="Goo Y.A."/>
            <person name="Leithauser B."/>
            <person name="Keller K."/>
            <person name="Cruz R."/>
            <person name="Danson M.J."/>
            <person name="Hough D.W."/>
            <person name="Maddocks D.G."/>
            <person name="Jablonski P.E."/>
            <person name="Krebs M.P."/>
            <person name="Angevine C.M."/>
            <person name="Dale H."/>
            <person name="Isenbarger T.A."/>
            <person name="Peck R.F."/>
            <person name="Pohlschroder M."/>
            <person name="Spudich J.L."/>
            <person name="Jung K.-H."/>
            <person name="Alam M."/>
            <person name="Freitas T."/>
            <person name="Hou S."/>
            <person name="Daniels C.J."/>
            <person name="Dennis P.P."/>
            <person name="Omer A.D."/>
            <person name="Ebhardt H."/>
            <person name="Lowe T.M."/>
            <person name="Liang P."/>
            <person name="Riley M."/>
            <person name="Hood L."/>
            <person name="DasSarma S."/>
        </authorList>
    </citation>
    <scope>NUCLEOTIDE SEQUENCE [LARGE SCALE GENOMIC DNA]</scope>
    <source>
        <strain>ATCC 700922 / JCM 11081 / NRC-1</strain>
    </source>
</reference>
<gene>
    <name type="primary">polB</name>
    <name type="synonym">polA1</name>
    <name type="ordered locus">VNG_2417G</name>
</gene>
<evidence type="ECO:0000250" key="1"/>
<evidence type="ECO:0000256" key="2">
    <source>
        <dbReference type="SAM" id="MobiDB-lite"/>
    </source>
</evidence>
<evidence type="ECO:0000305" key="3"/>
<dbReference type="EC" id="2.7.7.7"/>
<dbReference type="EC" id="3.1.11.1"/>
<dbReference type="EMBL" id="AE004437">
    <property type="protein sequence ID" value="AAG20504.1"/>
    <property type="status" value="ALT_INIT"/>
    <property type="molecule type" value="Genomic_DNA"/>
</dbReference>
<dbReference type="PIR" id="D84392">
    <property type="entry name" value="D84392"/>
</dbReference>
<dbReference type="RefSeq" id="WP_012289503.1">
    <property type="nucleotide sequence ID" value="NC_002607.1"/>
</dbReference>
<dbReference type="SMR" id="Q9HMR7"/>
<dbReference type="FunCoup" id="Q9HMR7">
    <property type="interactions" value="10"/>
</dbReference>
<dbReference type="STRING" id="64091.VNG_2417G"/>
<dbReference type="PaxDb" id="64091-VNG_2417G"/>
<dbReference type="KEGG" id="hal:VNG_2417G"/>
<dbReference type="PATRIC" id="fig|64091.14.peg.1871"/>
<dbReference type="HOGENOM" id="CLU_027850_0_0_2"/>
<dbReference type="InParanoid" id="Q9HMR7"/>
<dbReference type="OrthoDB" id="372039at2157"/>
<dbReference type="PhylomeDB" id="Q9HMR7"/>
<dbReference type="Proteomes" id="UP000000554">
    <property type="component" value="Chromosome"/>
</dbReference>
<dbReference type="GO" id="GO:0042575">
    <property type="term" value="C:DNA polymerase complex"/>
    <property type="evidence" value="ECO:0000318"/>
    <property type="project" value="GO_Central"/>
</dbReference>
<dbReference type="GO" id="GO:0003677">
    <property type="term" value="F:DNA binding"/>
    <property type="evidence" value="ECO:0007669"/>
    <property type="project" value="UniProtKB-UniRule"/>
</dbReference>
<dbReference type="GO" id="GO:0003887">
    <property type="term" value="F:DNA-directed DNA polymerase activity"/>
    <property type="evidence" value="ECO:0007669"/>
    <property type="project" value="UniProtKB-UniRule"/>
</dbReference>
<dbReference type="GO" id="GO:0008310">
    <property type="term" value="F:single-stranded DNA 3'-5' DNA exonuclease activity"/>
    <property type="evidence" value="ECO:0007669"/>
    <property type="project" value="UniProtKB-EC"/>
</dbReference>
<dbReference type="GO" id="GO:0006308">
    <property type="term" value="P:DNA catabolic process"/>
    <property type="evidence" value="ECO:0007669"/>
    <property type="project" value="UniProtKB-UniRule"/>
</dbReference>
<dbReference type="GO" id="GO:0006271">
    <property type="term" value="P:DNA strand elongation involved in DNA replication"/>
    <property type="evidence" value="ECO:0000318"/>
    <property type="project" value="GO_Central"/>
</dbReference>
<dbReference type="CDD" id="cd07386">
    <property type="entry name" value="MPP_DNA_pol_II_small_archeal_C"/>
    <property type="match status" value="1"/>
</dbReference>
<dbReference type="CDD" id="cd04490">
    <property type="entry name" value="PolII_SU_OBF"/>
    <property type="match status" value="1"/>
</dbReference>
<dbReference type="FunFam" id="3.60.21.50:FF:000003">
    <property type="entry name" value="DNA polymerase II small subunit"/>
    <property type="match status" value="1"/>
</dbReference>
<dbReference type="Gene3D" id="3.60.21.50">
    <property type="match status" value="1"/>
</dbReference>
<dbReference type="HAMAP" id="MF_00325">
    <property type="entry name" value="DNApol_II_A_arch"/>
    <property type="match status" value="1"/>
</dbReference>
<dbReference type="InterPro" id="IPR007185">
    <property type="entry name" value="DNA_pol_a/d/e_bsu"/>
</dbReference>
<dbReference type="InterPro" id="IPR024826">
    <property type="entry name" value="DNA_pol_delta/II_ssu"/>
</dbReference>
<dbReference type="InterPro" id="IPR029052">
    <property type="entry name" value="Metallo-depent_PP-like"/>
</dbReference>
<dbReference type="InterPro" id="IPR011149">
    <property type="entry name" value="Pol2_small_arc"/>
</dbReference>
<dbReference type="NCBIfam" id="NF003116">
    <property type="entry name" value="PRK04036.1-1"/>
    <property type="match status" value="1"/>
</dbReference>
<dbReference type="NCBIfam" id="NF003118">
    <property type="entry name" value="PRK04036.1-3"/>
    <property type="match status" value="1"/>
</dbReference>
<dbReference type="PANTHER" id="PTHR10416">
    <property type="entry name" value="DNA POLYMERASE DELTA SUBUNIT 2"/>
    <property type="match status" value="1"/>
</dbReference>
<dbReference type="PANTHER" id="PTHR10416:SF0">
    <property type="entry name" value="DNA POLYMERASE DELTA SUBUNIT 2"/>
    <property type="match status" value="1"/>
</dbReference>
<dbReference type="Pfam" id="PF04042">
    <property type="entry name" value="DNA_pol_E_B"/>
    <property type="match status" value="1"/>
</dbReference>
<dbReference type="PIRSF" id="PIRSF000803">
    <property type="entry name" value="Arc_Pol2_small"/>
    <property type="match status" value="1"/>
</dbReference>
<dbReference type="SUPFAM" id="SSF56300">
    <property type="entry name" value="Metallo-dependent phosphatases"/>
    <property type="match status" value="1"/>
</dbReference>